<sequence length="954" mass="105821">MWILESELFDGKRLWLRPGKTYLFGRTVAEAGQLTISDKTVSRKHLTIHIDNVPEGGGRNLRSRSNVIVEDLESKKGTLVNGVQIRGQKTTLTEDVNEIKLGLCPKTLKIRWHPIVLSFSFTSKELRADPWTNLRDSLEQLDIKYSAEYEPTTTHVVSKKRNTSKGLQALINGRYIVTDSFINAIVQATEIPEGEEGASSALEQDFEANWPNPLDHLPPRGEEPGNHTTETYAPDARRQEVFDGYTFIFYEKKQYDNLFPAISAGKGKALLKEVVPNRTRVDEFVRYVKSVAGEKGLGSFEDGSEGKGVVVVRYTPKGEDSAWYAEFFTKFAQQLDHRPIDQKEFLEAILACDASMLRRPLEAMSQPVSVSASVEPQSSEKVRPAVEDRKEVEQSAPKQLQPSAEVPATEESAPAPHRRERRTGRSRFKGFDFDDDDIIIETPQAQSSTQVPALPQVPSASQDSLFVSQREPSLAPSEPMLEEEAPCNTRTTRQTHRKRVLSPLPEHDNSALLDEIAPITAAVKRRRIEAGQDPVPPLPEPEPEREDEDVEMVEESPPRKGKKGAATTAKGKGKKIKQEDEENVLELARRRREEAEAAAAAERQRLAQLGDDDIDYAAIRRLHIIEEIEVRQPEPHGPNRTREQDIADGRWDPRWNGRKNFKRFRRQGETGVRMPVQSVIVPLEEVRTKEYGIGDDYWLEDEEGRVPRRPKETQTQERSTIGSVRDGSGFAAAAASGKGKEKDKENEKEVGRPGSSAAAAKQRSKPAPRRTVLTLDSSDEDEDEPSPHAPGIDTISDSEPEVVSSFPSVIPASEPSRSRAAKAAERANALRSSAHSSQSQTQQHRESQLSTGSSKIQLTLAPGSSSLSFSRSGTAAGRNENGKRPFGSFVSGESTASGRGMSVESGSVRGESASKRQKQGSSGGGSFLATRRKDDGSEEESEDDELKFRFGRRR</sequence>
<feature type="chain" id="PRO_0000460317" description="DNA repair and telomere maintenance protein NBS1">
    <location>
        <begin position="1"/>
        <end position="954"/>
    </location>
</feature>
<feature type="domain" description="FHA" evidence="2">
    <location>
        <begin position="22"/>
        <end position="85"/>
    </location>
</feature>
<feature type="domain" description="BRCT 1" evidence="1">
    <location>
        <begin position="107"/>
        <end position="186"/>
    </location>
</feature>
<feature type="domain" description="BRCT 2" evidence="1">
    <location>
        <begin position="244"/>
        <end position="349"/>
    </location>
</feature>
<feature type="region of interest" description="Disordered" evidence="3">
    <location>
        <begin position="368"/>
        <end position="431"/>
    </location>
</feature>
<feature type="region of interest" description="Disordered" evidence="3">
    <location>
        <begin position="444"/>
        <end position="506"/>
    </location>
</feature>
<feature type="region of interest" description="Disordered" evidence="3">
    <location>
        <begin position="528"/>
        <end position="580"/>
    </location>
</feature>
<feature type="region of interest" description="Disordered" evidence="3">
    <location>
        <begin position="630"/>
        <end position="654"/>
    </location>
</feature>
<feature type="region of interest" description="Disordered" evidence="3">
    <location>
        <begin position="692"/>
        <end position="954"/>
    </location>
</feature>
<feature type="compositionally biased region" description="Polar residues" evidence="3">
    <location>
        <begin position="368"/>
        <end position="377"/>
    </location>
</feature>
<feature type="compositionally biased region" description="Basic and acidic residues" evidence="3">
    <location>
        <begin position="378"/>
        <end position="393"/>
    </location>
</feature>
<feature type="compositionally biased region" description="Basic residues" evidence="3">
    <location>
        <begin position="416"/>
        <end position="428"/>
    </location>
</feature>
<feature type="compositionally biased region" description="Polar residues" evidence="3">
    <location>
        <begin position="458"/>
        <end position="471"/>
    </location>
</feature>
<feature type="compositionally biased region" description="Acidic residues" evidence="3">
    <location>
        <begin position="541"/>
        <end position="554"/>
    </location>
</feature>
<feature type="compositionally biased region" description="Basic and acidic residues" evidence="3">
    <location>
        <begin position="640"/>
        <end position="654"/>
    </location>
</feature>
<feature type="compositionally biased region" description="Basic and acidic residues" evidence="3">
    <location>
        <begin position="704"/>
        <end position="715"/>
    </location>
</feature>
<feature type="compositionally biased region" description="Low complexity" evidence="3">
    <location>
        <begin position="726"/>
        <end position="737"/>
    </location>
</feature>
<feature type="compositionally biased region" description="Basic and acidic residues" evidence="3">
    <location>
        <begin position="738"/>
        <end position="751"/>
    </location>
</feature>
<feature type="compositionally biased region" description="Low complexity" evidence="3">
    <location>
        <begin position="801"/>
        <end position="815"/>
    </location>
</feature>
<feature type="compositionally biased region" description="Low complexity" evidence="3">
    <location>
        <begin position="826"/>
        <end position="842"/>
    </location>
</feature>
<feature type="compositionally biased region" description="Acidic residues" evidence="3">
    <location>
        <begin position="936"/>
        <end position="945"/>
    </location>
</feature>
<reference key="1">
    <citation type="journal article" date="2011" name="Cell">
        <title>Insight into structure and assembly of the nuclear pore complex by utilizing the genome of a eukaryotic thermophile.</title>
        <authorList>
            <person name="Amlacher S."/>
            <person name="Sarges P."/>
            <person name="Flemming D."/>
            <person name="van Noort V."/>
            <person name="Kunze R."/>
            <person name="Devos D.P."/>
            <person name="Arumugam M."/>
            <person name="Bork P."/>
            <person name="Hurt E."/>
        </authorList>
    </citation>
    <scope>NUCLEOTIDE SEQUENCE [LARGE SCALE GENOMIC DNA]</scope>
    <source>
        <strain>DSM 1495 / CBS 144.50 / IMI 039719</strain>
    </source>
</reference>
<reference evidence="8" key="2">
    <citation type="journal article" date="2023" name="Mol. Cell">
        <title>Cryo-EM structure of the Mre11-Rad50-Nbs1 complex reveals the molecular mechanism of scaffolding functions.</title>
        <authorList>
            <person name="Rotheneder M."/>
            <person name="Stakyte K."/>
            <person name="van de Logt E."/>
            <person name="Bartho J.D."/>
            <person name="Lammens K."/>
            <person name="Fan Y."/>
            <person name="Alt A."/>
            <person name="Kessler B."/>
            <person name="Jung C."/>
            <person name="Roos W.P."/>
            <person name="Steigenberger B."/>
            <person name="Hopfner K.P."/>
        </authorList>
    </citation>
    <scope>STRUCTURE BY ELECTRON MICROSCOPY (4.00 ANGSTROMS) IN COMPLEX WITH MRE11 AND RAD50</scope>
    <scope>IDENTIFICATION IN THE MRE11 COMPLEX</scope>
</reference>
<dbReference type="EMBL" id="GL988044">
    <property type="protein sequence ID" value="EGS19331.1"/>
    <property type="molecule type" value="Genomic_DNA"/>
</dbReference>
<dbReference type="RefSeq" id="XP_006695153.1">
    <property type="nucleotide sequence ID" value="XM_006695090.1"/>
</dbReference>
<dbReference type="PDB" id="7ZR1">
    <property type="method" value="EM"/>
    <property type="resolution" value="4.00 A"/>
    <property type="chains" value="E=1-954"/>
</dbReference>
<dbReference type="PDBsum" id="7ZR1"/>
<dbReference type="EMDB" id="EMD-14881"/>
<dbReference type="SMR" id="G0SAV1"/>
<dbReference type="STRING" id="759272.G0SAV1"/>
<dbReference type="GeneID" id="18258826"/>
<dbReference type="KEGG" id="cthr:CTHT_0047880"/>
<dbReference type="eggNOG" id="ENOG502QQ7Y">
    <property type="taxonomic scope" value="Eukaryota"/>
</dbReference>
<dbReference type="HOGENOM" id="CLU_007951_0_0_1"/>
<dbReference type="OMA" id="GIGDHYW"/>
<dbReference type="OrthoDB" id="552194at2759"/>
<dbReference type="Proteomes" id="UP000008066">
    <property type="component" value="Unassembled WGS sequence"/>
</dbReference>
<dbReference type="GO" id="GO:0005694">
    <property type="term" value="C:chromosome"/>
    <property type="evidence" value="ECO:0007669"/>
    <property type="project" value="UniProtKB-SubCell"/>
</dbReference>
<dbReference type="GO" id="GO:0030870">
    <property type="term" value="C:Mre11 complex"/>
    <property type="evidence" value="ECO:0000314"/>
    <property type="project" value="UniProtKB"/>
</dbReference>
<dbReference type="GO" id="GO:0003684">
    <property type="term" value="F:damaged DNA binding"/>
    <property type="evidence" value="ECO:0007669"/>
    <property type="project" value="TreeGrafter"/>
</dbReference>
<dbReference type="GO" id="GO:0000724">
    <property type="term" value="P:double-strand break repair via homologous recombination"/>
    <property type="evidence" value="ECO:0007669"/>
    <property type="project" value="TreeGrafter"/>
</dbReference>
<dbReference type="GO" id="GO:0007095">
    <property type="term" value="P:mitotic G2 DNA damage checkpoint signaling"/>
    <property type="evidence" value="ECO:0007669"/>
    <property type="project" value="InterPro"/>
</dbReference>
<dbReference type="CDD" id="cd17741">
    <property type="entry name" value="BRCT_nibrin"/>
    <property type="match status" value="1"/>
</dbReference>
<dbReference type="CDD" id="cd22667">
    <property type="entry name" value="FHA_NBN"/>
    <property type="match status" value="1"/>
</dbReference>
<dbReference type="Gene3D" id="2.60.200.20">
    <property type="match status" value="1"/>
</dbReference>
<dbReference type="Gene3D" id="3.40.50.10190">
    <property type="entry name" value="BRCT domain"/>
    <property type="match status" value="1"/>
</dbReference>
<dbReference type="Gene3D" id="3.40.50.10980">
    <property type="entry name" value="Nibrin, BRCT2 domain"/>
    <property type="match status" value="1"/>
</dbReference>
<dbReference type="InterPro" id="IPR036420">
    <property type="entry name" value="BRCT_dom_sf"/>
</dbReference>
<dbReference type="InterPro" id="IPR000253">
    <property type="entry name" value="FHA_dom"/>
</dbReference>
<dbReference type="InterPro" id="IPR040227">
    <property type="entry name" value="Nibrin-rel"/>
</dbReference>
<dbReference type="InterPro" id="IPR032429">
    <property type="entry name" value="Nibrin_BRCT2"/>
</dbReference>
<dbReference type="InterPro" id="IPR043014">
    <property type="entry name" value="Nibrin_BRCT2_sf"/>
</dbReference>
<dbReference type="InterPro" id="IPR008984">
    <property type="entry name" value="SMAD_FHA_dom_sf"/>
</dbReference>
<dbReference type="PANTHER" id="PTHR12162:SF0">
    <property type="entry name" value="NIBRIN"/>
    <property type="match status" value="1"/>
</dbReference>
<dbReference type="PANTHER" id="PTHR12162">
    <property type="entry name" value="NIBRIN-RELATED"/>
    <property type="match status" value="1"/>
</dbReference>
<dbReference type="Pfam" id="PF00498">
    <property type="entry name" value="FHA"/>
    <property type="match status" value="1"/>
</dbReference>
<dbReference type="Pfam" id="PF16508">
    <property type="entry name" value="NIBRIN_BRCT_II"/>
    <property type="match status" value="1"/>
</dbReference>
<dbReference type="SMART" id="SM00240">
    <property type="entry name" value="FHA"/>
    <property type="match status" value="1"/>
</dbReference>
<dbReference type="SUPFAM" id="SSF52113">
    <property type="entry name" value="BRCT domain"/>
    <property type="match status" value="1"/>
</dbReference>
<dbReference type="SUPFAM" id="SSF49879">
    <property type="entry name" value="SMAD/FHA domain"/>
    <property type="match status" value="1"/>
</dbReference>
<dbReference type="PROSITE" id="PS50006">
    <property type="entry name" value="FHA_DOMAIN"/>
    <property type="match status" value="1"/>
</dbReference>
<organism>
    <name type="scientific">Chaetomium thermophilum (strain DSM 1495 / CBS 144.50 / IMI 039719)</name>
    <name type="common">Thermochaetoides thermophila</name>
    <dbReference type="NCBI Taxonomy" id="759272"/>
    <lineage>
        <taxon>Eukaryota</taxon>
        <taxon>Fungi</taxon>
        <taxon>Dikarya</taxon>
        <taxon>Ascomycota</taxon>
        <taxon>Pezizomycotina</taxon>
        <taxon>Sordariomycetes</taxon>
        <taxon>Sordariomycetidae</taxon>
        <taxon>Sordariales</taxon>
        <taxon>Chaetomiaceae</taxon>
        <taxon>Thermochaetoides</taxon>
    </lineage>
</organism>
<accession>G0SAV1</accession>
<keyword id="KW-0002">3D-structure</keyword>
<keyword id="KW-0158">Chromosome</keyword>
<keyword id="KW-0227">DNA damage</keyword>
<keyword id="KW-0234">DNA repair</keyword>
<keyword id="KW-0539">Nucleus</keyword>
<keyword id="KW-1185">Reference proteome</keyword>
<protein>
    <recommendedName>
        <fullName evidence="6">DNA repair and telomere maintenance protein NBS1</fullName>
    </recommendedName>
</protein>
<name>NBS1_CHATD</name>
<evidence type="ECO:0000250" key="1">
    <source>
        <dbReference type="UniProtKB" id="O60934"/>
    </source>
</evidence>
<evidence type="ECO:0000255" key="2">
    <source>
        <dbReference type="PROSITE-ProRule" id="PRU00086"/>
    </source>
</evidence>
<evidence type="ECO:0000256" key="3">
    <source>
        <dbReference type="SAM" id="MobiDB-lite"/>
    </source>
</evidence>
<evidence type="ECO:0000269" key="4">
    <source>
    </source>
</evidence>
<evidence type="ECO:0000303" key="5">
    <source>
    </source>
</evidence>
<evidence type="ECO:0000305" key="6"/>
<evidence type="ECO:0000312" key="7">
    <source>
        <dbReference type="EMBL" id="EGS19331.1"/>
    </source>
</evidence>
<evidence type="ECO:0007744" key="8">
    <source>
        <dbReference type="PDB" id="7ZR1"/>
    </source>
</evidence>
<gene>
    <name evidence="5" type="primary">NBS1</name>
    <name evidence="7" type="ORF">CTHT_0047880</name>
</gene>
<comment type="function">
    <text evidence="1">Component of the MRN complex, which plays a central role in double-strand break (DSB) repair, DNA recombination, maintenance of telomere integrity and meiosis (By similarity). The MRN complex is involved in the repair of DNA double-strand breaks (DSBs) via homologous recombination (HR), an error-free mechanism which primarily occurs during S and G2 phases (By similarity). The complex (1) mediates the end resection of damaged DNA, which generates proper single-stranded DNA, a key initial steps in HR, and is (2) required for the recruitment of other repair factors and efficient activation of ATM and ATR upon DNA damage (By similarity). The MRN complex possesses single-strand endonuclease activity and double-strand-specific 3'-5' exonuclease activity, which are provided by MRE11, to initiate end resection, which is required for single-strand invasion and recombination (By similarity). Within the MRN complex, NBS1 acts as a protein-protein adapter, which specifically recognizes and binds phosphorylated proteins, promoting their recruitment to DNA damage sites (By similarity). Recruits MRE11 and RAD50 components of the MRN complex to DSBs in response to DNA damage (By similarity).</text>
</comment>
<comment type="subunit">
    <text evidence="4">Component of the MRN complex composed of two heterodimers RAD50 and MRE11 associated with a single NBS1.</text>
</comment>
<comment type="subcellular location">
    <subcellularLocation>
        <location evidence="1">Nucleus</location>
    </subcellularLocation>
    <subcellularLocation>
        <location evidence="1">Chromosome</location>
    </subcellularLocation>
    <text evidence="1">Localizes to DNA double-strand breaks (DSBs).</text>
</comment>
<comment type="domain">
    <text evidence="1">The FHA and BRCT domains specifically recognize and bind phosphorylated proteins.</text>
</comment>
<comment type="similarity">
    <text evidence="6">Belongs to the Nibrin family.</text>
</comment>
<proteinExistence type="evidence at protein level"/>